<comment type="function">
    <text>Involved in production of the peptide pheromone cAD1.</text>
</comment>
<comment type="cofactor">
    <cofactor evidence="4">
        <name>Zn(2+)</name>
        <dbReference type="ChEBI" id="CHEBI:29105"/>
    </cofactor>
</comment>
<comment type="subcellular location">
    <subcellularLocation>
        <location evidence="4">Cell membrane</location>
        <topology evidence="4">Multi-pass membrane protein</topology>
    </subcellularLocation>
</comment>
<comment type="similarity">
    <text evidence="4">Belongs to the peptidase M50B family.</text>
</comment>
<reference key="1">
    <citation type="journal article" date="1999" name="J. Bacteriol.">
        <title>Identification and characterization of a determinant (eep) on the Enterococcus faecalis chromosome that is involved in production of the peptide sex pheromone cAD1.</title>
        <authorList>
            <person name="An F.Y."/>
            <person name="Sulavik M.C."/>
            <person name="Clewell D.B."/>
        </authorList>
    </citation>
    <scope>NUCLEOTIDE SEQUENCE [GENOMIC DNA]</scope>
    <source>
        <strain>OG1X</strain>
    </source>
</reference>
<reference key="2">
    <citation type="journal article" date="2003" name="Science">
        <title>Role of mobile DNA in the evolution of vancomycin-resistant Enterococcus faecalis.</title>
        <authorList>
            <person name="Paulsen I.T."/>
            <person name="Banerjei L."/>
            <person name="Myers G.S.A."/>
            <person name="Nelson K.E."/>
            <person name="Seshadri R."/>
            <person name="Read T.D."/>
            <person name="Fouts D.E."/>
            <person name="Eisen J.A."/>
            <person name="Gill S.R."/>
            <person name="Heidelberg J.F."/>
            <person name="Tettelin H."/>
            <person name="Dodson R.J."/>
            <person name="Umayam L.A."/>
            <person name="Brinkac L.M."/>
            <person name="Beanan M.J."/>
            <person name="Daugherty S.C."/>
            <person name="DeBoy R.T."/>
            <person name="Durkin S.A."/>
            <person name="Kolonay J.F."/>
            <person name="Madupu R."/>
            <person name="Nelson W.C."/>
            <person name="Vamathevan J.J."/>
            <person name="Tran B."/>
            <person name="Upton J."/>
            <person name="Hansen T."/>
            <person name="Shetty J."/>
            <person name="Khouri H.M."/>
            <person name="Utterback T.R."/>
            <person name="Radune D."/>
            <person name="Ketchum K.A."/>
            <person name="Dougherty B.A."/>
            <person name="Fraser C.M."/>
        </authorList>
    </citation>
    <scope>NUCLEOTIDE SEQUENCE [LARGE SCALE GENOMIC DNA]</scope>
    <source>
        <strain>ATCC 700802 / V583</strain>
    </source>
</reference>
<accession>Q9RPP2</accession>
<feature type="chain" id="PRO_0000088423" description="Probable protease eep">
    <location>
        <begin position="1"/>
        <end position="422"/>
    </location>
</feature>
<feature type="transmembrane region" description="Helical" evidence="1">
    <location>
        <begin position="176"/>
        <end position="196"/>
    </location>
</feature>
<feature type="transmembrane region" description="Helical" evidence="1">
    <location>
        <begin position="349"/>
        <end position="369"/>
    </location>
</feature>
<feature type="transmembrane region" description="Helical" evidence="1">
    <location>
        <begin position="394"/>
        <end position="414"/>
    </location>
</feature>
<feature type="domain" description="PDZ" evidence="2">
    <location>
        <begin position="179"/>
        <end position="273"/>
    </location>
</feature>
<feature type="active site" evidence="3">
    <location>
        <position position="19"/>
    </location>
</feature>
<feature type="binding site" evidence="3">
    <location>
        <position position="18"/>
    </location>
    <ligand>
        <name>Zn(2+)</name>
        <dbReference type="ChEBI" id="CHEBI:29105"/>
        <note>catalytic</note>
    </ligand>
</feature>
<feature type="binding site" evidence="3">
    <location>
        <position position="22"/>
    </location>
    <ligand>
        <name>Zn(2+)</name>
        <dbReference type="ChEBI" id="CHEBI:29105"/>
        <note>catalytic</note>
    </ligand>
</feature>
<feature type="sequence conflict" description="In Ref. 1; AAD47948." evidence="4" ref="1">
    <original>I</original>
    <variation>V</variation>
    <location>
        <position position="114"/>
    </location>
</feature>
<gene>
    <name type="primary">eep</name>
    <name type="ordered locus">EF_2380</name>
</gene>
<organism>
    <name type="scientific">Enterococcus faecalis (strain ATCC 700802 / V583)</name>
    <dbReference type="NCBI Taxonomy" id="226185"/>
    <lineage>
        <taxon>Bacteria</taxon>
        <taxon>Bacillati</taxon>
        <taxon>Bacillota</taxon>
        <taxon>Bacilli</taxon>
        <taxon>Lactobacillales</taxon>
        <taxon>Enterococcaceae</taxon>
        <taxon>Enterococcus</taxon>
    </lineage>
</organism>
<sequence length="422" mass="46500">MKTIITFIIVFGILVLVHEFGHFYFAKRAGILVREFAIGMGPKIFAHRGKDGTTYTIRLLPIGGYVRMAGMGEDMTEITPGMPLSVELNAVGNVVKINTSKKVQLPHSIPMEVIDFDLEKELFIKGYVNGNEEEETVYKVDHDATIIESDGTEVRIAPLDVQFQSAKLSQRILTNFAGPMNNFILGFILFTLAVFLQGGVTDLNTNQIGQVIPNGPAAEAGLKENDKVLSINNQKIKKYEDFTTIVQKNPEKPLTFVVERNGKEEQLTVTPEKQKVEKQTIGKVGVYPYMKTDLPSKLMGGIQDTLNSTTQIFKALGSLFTGFSLNKLGGPVMMFKLSEEASNAGVSTVVFLMAMLSMNLGIINLLPIPALDGGKIVLNIIEGVRGKPISPEKEGIITLIGFGFVMVLMVLVTWNDIQRFFF</sequence>
<evidence type="ECO:0000255" key="1"/>
<evidence type="ECO:0000255" key="2">
    <source>
        <dbReference type="PROSITE-ProRule" id="PRU00143"/>
    </source>
</evidence>
<evidence type="ECO:0000255" key="3">
    <source>
        <dbReference type="PROSITE-ProRule" id="PRU10095"/>
    </source>
</evidence>
<evidence type="ECO:0000305" key="4"/>
<protein>
    <recommendedName>
        <fullName>Probable protease eep</fullName>
        <ecNumber>3.4.24.-</ecNumber>
    </recommendedName>
</protein>
<proteinExistence type="inferred from homology"/>
<keyword id="KW-1003">Cell membrane</keyword>
<keyword id="KW-0378">Hydrolase</keyword>
<keyword id="KW-0472">Membrane</keyword>
<keyword id="KW-0479">Metal-binding</keyword>
<keyword id="KW-0482">Metalloprotease</keyword>
<keyword id="KW-0645">Protease</keyword>
<keyword id="KW-1185">Reference proteome</keyword>
<keyword id="KW-0812">Transmembrane</keyword>
<keyword id="KW-1133">Transmembrane helix</keyword>
<keyword id="KW-0862">Zinc</keyword>
<name>EEP_ENTFA</name>
<dbReference type="EC" id="3.4.24.-"/>
<dbReference type="EMBL" id="AF152237">
    <property type="protein sequence ID" value="AAD47948.1"/>
    <property type="molecule type" value="Genomic_DNA"/>
</dbReference>
<dbReference type="EMBL" id="AE016830">
    <property type="protein sequence ID" value="AAO82101.1"/>
    <property type="molecule type" value="Genomic_DNA"/>
</dbReference>
<dbReference type="RefSeq" id="NP_816031.1">
    <property type="nucleotide sequence ID" value="NC_004668.1"/>
</dbReference>
<dbReference type="SMR" id="Q9RPP2"/>
<dbReference type="STRING" id="226185.EF_2380"/>
<dbReference type="EnsemblBacteria" id="AAO82101">
    <property type="protein sequence ID" value="AAO82101"/>
    <property type="gene ID" value="EF_2380"/>
</dbReference>
<dbReference type="KEGG" id="efa:EF2380"/>
<dbReference type="PATRIC" id="fig|226185.45.peg.1158"/>
<dbReference type="eggNOG" id="COG0750">
    <property type="taxonomic scope" value="Bacteria"/>
</dbReference>
<dbReference type="HOGENOM" id="CLU_025778_1_0_9"/>
<dbReference type="Proteomes" id="UP000001415">
    <property type="component" value="Chromosome"/>
</dbReference>
<dbReference type="GO" id="GO:0005886">
    <property type="term" value="C:plasma membrane"/>
    <property type="evidence" value="ECO:0007669"/>
    <property type="project" value="UniProtKB-SubCell"/>
</dbReference>
<dbReference type="GO" id="GO:0046872">
    <property type="term" value="F:metal ion binding"/>
    <property type="evidence" value="ECO:0007669"/>
    <property type="project" value="UniProtKB-KW"/>
</dbReference>
<dbReference type="GO" id="GO:0004222">
    <property type="term" value="F:metalloendopeptidase activity"/>
    <property type="evidence" value="ECO:0007669"/>
    <property type="project" value="InterPro"/>
</dbReference>
<dbReference type="GO" id="GO:0006508">
    <property type="term" value="P:proteolysis"/>
    <property type="evidence" value="ECO:0007669"/>
    <property type="project" value="UniProtKB-KW"/>
</dbReference>
<dbReference type="CDD" id="cd23081">
    <property type="entry name" value="cpPDZ_EcRseP-like"/>
    <property type="match status" value="1"/>
</dbReference>
<dbReference type="CDD" id="cd06163">
    <property type="entry name" value="S2P-M50_PDZ_RseP-like"/>
    <property type="match status" value="1"/>
</dbReference>
<dbReference type="Gene3D" id="2.30.42.10">
    <property type="match status" value="1"/>
</dbReference>
<dbReference type="InterPro" id="IPR001478">
    <property type="entry name" value="PDZ"/>
</dbReference>
<dbReference type="InterPro" id="IPR041489">
    <property type="entry name" value="PDZ_6"/>
</dbReference>
<dbReference type="InterPro" id="IPR036034">
    <property type="entry name" value="PDZ_sf"/>
</dbReference>
<dbReference type="InterPro" id="IPR004387">
    <property type="entry name" value="Pept_M50_Zn"/>
</dbReference>
<dbReference type="InterPro" id="IPR008915">
    <property type="entry name" value="Peptidase_M50"/>
</dbReference>
<dbReference type="NCBIfam" id="TIGR00054">
    <property type="entry name" value="RIP metalloprotease RseP"/>
    <property type="match status" value="1"/>
</dbReference>
<dbReference type="PANTHER" id="PTHR42837:SF2">
    <property type="entry name" value="MEMBRANE METALLOPROTEASE ARASP2, CHLOROPLASTIC-RELATED"/>
    <property type="match status" value="1"/>
</dbReference>
<dbReference type="PANTHER" id="PTHR42837">
    <property type="entry name" value="REGULATOR OF SIGMA-E PROTEASE RSEP"/>
    <property type="match status" value="1"/>
</dbReference>
<dbReference type="Pfam" id="PF17820">
    <property type="entry name" value="PDZ_6"/>
    <property type="match status" value="1"/>
</dbReference>
<dbReference type="Pfam" id="PF02163">
    <property type="entry name" value="Peptidase_M50"/>
    <property type="match status" value="1"/>
</dbReference>
<dbReference type="SMART" id="SM00228">
    <property type="entry name" value="PDZ"/>
    <property type="match status" value="1"/>
</dbReference>
<dbReference type="SUPFAM" id="SSF50156">
    <property type="entry name" value="PDZ domain-like"/>
    <property type="match status" value="1"/>
</dbReference>
<dbReference type="PROSITE" id="PS50106">
    <property type="entry name" value="PDZ"/>
    <property type="match status" value="1"/>
</dbReference>
<dbReference type="PROSITE" id="PS00142">
    <property type="entry name" value="ZINC_PROTEASE"/>
    <property type="match status" value="1"/>
</dbReference>